<evidence type="ECO:0000255" key="1">
    <source>
        <dbReference type="HAMAP-Rule" id="MF_00075"/>
    </source>
</evidence>
<gene>
    <name evidence="1" type="primary">infA</name>
    <name type="ordered locus">Hhal_1399</name>
</gene>
<comment type="function">
    <text evidence="1">One of the essential components for the initiation of protein synthesis. Stabilizes the binding of IF-2 and IF-3 on the 30S subunit to which N-formylmethionyl-tRNA(fMet) subsequently binds. Helps modulate mRNA selection, yielding the 30S pre-initiation complex (PIC). Upon addition of the 50S ribosomal subunit IF-1, IF-2 and IF-3 are released leaving the mature 70S translation initiation complex.</text>
</comment>
<comment type="subunit">
    <text evidence="1">Component of the 30S ribosomal translation pre-initiation complex which assembles on the 30S ribosome in the order IF-2 and IF-3, IF-1 and N-formylmethionyl-tRNA(fMet); mRNA recruitment can occur at any time during PIC assembly.</text>
</comment>
<comment type="subcellular location">
    <subcellularLocation>
        <location evidence="1">Cytoplasm</location>
    </subcellularLocation>
</comment>
<comment type="similarity">
    <text evidence="1">Belongs to the IF-1 family.</text>
</comment>
<accession>A1WWV4</accession>
<protein>
    <recommendedName>
        <fullName evidence="1">Translation initiation factor IF-1</fullName>
    </recommendedName>
</protein>
<keyword id="KW-0963">Cytoplasm</keyword>
<keyword id="KW-0396">Initiation factor</keyword>
<keyword id="KW-0648">Protein biosynthesis</keyword>
<keyword id="KW-1185">Reference proteome</keyword>
<keyword id="KW-0694">RNA-binding</keyword>
<keyword id="KW-0699">rRNA-binding</keyword>
<reference key="1">
    <citation type="submission" date="2006-12" db="EMBL/GenBank/DDBJ databases">
        <title>Complete sequence of Halorhodospira halophila SL1.</title>
        <authorList>
            <consortium name="US DOE Joint Genome Institute"/>
            <person name="Copeland A."/>
            <person name="Lucas S."/>
            <person name="Lapidus A."/>
            <person name="Barry K."/>
            <person name="Detter J.C."/>
            <person name="Glavina del Rio T."/>
            <person name="Hammon N."/>
            <person name="Israni S."/>
            <person name="Dalin E."/>
            <person name="Tice H."/>
            <person name="Pitluck S."/>
            <person name="Saunders E."/>
            <person name="Brettin T."/>
            <person name="Bruce D."/>
            <person name="Han C."/>
            <person name="Tapia R."/>
            <person name="Schmutz J."/>
            <person name="Larimer F."/>
            <person name="Land M."/>
            <person name="Hauser L."/>
            <person name="Kyrpides N."/>
            <person name="Mikhailova N."/>
            <person name="Hoff W."/>
            <person name="Richardson P."/>
        </authorList>
    </citation>
    <scope>NUCLEOTIDE SEQUENCE [LARGE SCALE GENOMIC DNA]</scope>
    <source>
        <strain>DSM 244 / SL1</strain>
    </source>
</reference>
<dbReference type="EMBL" id="CP000544">
    <property type="protein sequence ID" value="ABM62166.1"/>
    <property type="molecule type" value="Genomic_DNA"/>
</dbReference>
<dbReference type="RefSeq" id="WP_011814188.1">
    <property type="nucleotide sequence ID" value="NC_008789.1"/>
</dbReference>
<dbReference type="SMR" id="A1WWV4"/>
<dbReference type="STRING" id="349124.Hhal_1399"/>
<dbReference type="KEGG" id="hha:Hhal_1399"/>
<dbReference type="eggNOG" id="COG0361">
    <property type="taxonomic scope" value="Bacteria"/>
</dbReference>
<dbReference type="HOGENOM" id="CLU_151267_1_0_6"/>
<dbReference type="OrthoDB" id="9803250at2"/>
<dbReference type="Proteomes" id="UP000000647">
    <property type="component" value="Chromosome"/>
</dbReference>
<dbReference type="GO" id="GO:0005829">
    <property type="term" value="C:cytosol"/>
    <property type="evidence" value="ECO:0007669"/>
    <property type="project" value="TreeGrafter"/>
</dbReference>
<dbReference type="GO" id="GO:0043022">
    <property type="term" value="F:ribosome binding"/>
    <property type="evidence" value="ECO:0007669"/>
    <property type="project" value="UniProtKB-UniRule"/>
</dbReference>
<dbReference type="GO" id="GO:0019843">
    <property type="term" value="F:rRNA binding"/>
    <property type="evidence" value="ECO:0007669"/>
    <property type="project" value="UniProtKB-UniRule"/>
</dbReference>
<dbReference type="GO" id="GO:0003743">
    <property type="term" value="F:translation initiation factor activity"/>
    <property type="evidence" value="ECO:0007669"/>
    <property type="project" value="UniProtKB-UniRule"/>
</dbReference>
<dbReference type="CDD" id="cd04451">
    <property type="entry name" value="S1_IF1"/>
    <property type="match status" value="1"/>
</dbReference>
<dbReference type="FunFam" id="2.40.50.140:FF:000002">
    <property type="entry name" value="Translation initiation factor IF-1"/>
    <property type="match status" value="1"/>
</dbReference>
<dbReference type="Gene3D" id="2.40.50.140">
    <property type="entry name" value="Nucleic acid-binding proteins"/>
    <property type="match status" value="1"/>
</dbReference>
<dbReference type="HAMAP" id="MF_00075">
    <property type="entry name" value="IF_1"/>
    <property type="match status" value="1"/>
</dbReference>
<dbReference type="InterPro" id="IPR012340">
    <property type="entry name" value="NA-bd_OB-fold"/>
</dbReference>
<dbReference type="InterPro" id="IPR006196">
    <property type="entry name" value="RNA-binding_domain_S1_IF1"/>
</dbReference>
<dbReference type="InterPro" id="IPR003029">
    <property type="entry name" value="S1_domain"/>
</dbReference>
<dbReference type="InterPro" id="IPR004368">
    <property type="entry name" value="TIF_IF1"/>
</dbReference>
<dbReference type="NCBIfam" id="TIGR00008">
    <property type="entry name" value="infA"/>
    <property type="match status" value="1"/>
</dbReference>
<dbReference type="PANTHER" id="PTHR33370">
    <property type="entry name" value="TRANSLATION INITIATION FACTOR IF-1, CHLOROPLASTIC"/>
    <property type="match status" value="1"/>
</dbReference>
<dbReference type="PANTHER" id="PTHR33370:SF1">
    <property type="entry name" value="TRANSLATION INITIATION FACTOR IF-1, CHLOROPLASTIC"/>
    <property type="match status" value="1"/>
</dbReference>
<dbReference type="Pfam" id="PF01176">
    <property type="entry name" value="eIF-1a"/>
    <property type="match status" value="1"/>
</dbReference>
<dbReference type="SMART" id="SM00316">
    <property type="entry name" value="S1"/>
    <property type="match status" value="1"/>
</dbReference>
<dbReference type="SUPFAM" id="SSF50249">
    <property type="entry name" value="Nucleic acid-binding proteins"/>
    <property type="match status" value="1"/>
</dbReference>
<dbReference type="PROSITE" id="PS50832">
    <property type="entry name" value="S1_IF1_TYPE"/>
    <property type="match status" value="1"/>
</dbReference>
<feature type="chain" id="PRO_0000338837" description="Translation initiation factor IF-1">
    <location>
        <begin position="1"/>
        <end position="72"/>
    </location>
</feature>
<feature type="domain" description="S1-like" evidence="1">
    <location>
        <begin position="1"/>
        <end position="72"/>
    </location>
</feature>
<name>IF1_HALHL</name>
<proteinExistence type="inferred from homology"/>
<sequence>MAKEDSIRMQGVIVDTLPNTMFRVELENGHVVTAHISGKMRKHYIRILTGDKVTVELTPYDLNKGRIVYRER</sequence>
<organism>
    <name type="scientific">Halorhodospira halophila (strain DSM 244 / SL1)</name>
    <name type="common">Ectothiorhodospira halophila (strain DSM 244 / SL1)</name>
    <dbReference type="NCBI Taxonomy" id="349124"/>
    <lineage>
        <taxon>Bacteria</taxon>
        <taxon>Pseudomonadati</taxon>
        <taxon>Pseudomonadota</taxon>
        <taxon>Gammaproteobacteria</taxon>
        <taxon>Chromatiales</taxon>
        <taxon>Ectothiorhodospiraceae</taxon>
        <taxon>Halorhodospira</taxon>
    </lineage>
</organism>